<gene>
    <name type="primary">fraH</name>
    <name type="ordered locus">alr1603</name>
</gene>
<proteinExistence type="predicted"/>
<name>FRAH_NOSS1</name>
<comment type="function">
    <text>Putative heterocyst to vegetative cell connection.</text>
</comment>
<feature type="chain" id="PRO_0000087331" description="Protein FraH">
    <location>
        <begin position="1"/>
        <end position="289"/>
    </location>
</feature>
<feature type="domain" description="FHA" evidence="2">
    <location>
        <begin position="204"/>
        <end position="260"/>
    </location>
</feature>
<feature type="zinc finger region" description="DZANK-type" evidence="1">
    <location>
        <begin position="4"/>
        <end position="49"/>
    </location>
</feature>
<feature type="zinc finger region" evidence="1">
    <location>
        <begin position="18"/>
        <end position="48"/>
    </location>
</feature>
<organism>
    <name type="scientific">Nostoc sp. (strain PCC 7120 / SAG 25.82 / UTEX 2576)</name>
    <dbReference type="NCBI Taxonomy" id="103690"/>
    <lineage>
        <taxon>Bacteria</taxon>
        <taxon>Bacillati</taxon>
        <taxon>Cyanobacteriota</taxon>
        <taxon>Cyanophyceae</taxon>
        <taxon>Nostocales</taxon>
        <taxon>Nostocaceae</taxon>
        <taxon>Nostoc</taxon>
    </lineage>
</organism>
<accession>P46017</accession>
<protein>
    <recommendedName>
        <fullName>Protein FraH</fullName>
    </recommendedName>
</protein>
<reference key="1">
    <citation type="submission" date="1994-09" db="EMBL/GenBank/DDBJ databases">
        <title>Bacterial subtracted cDNA libraries containing genes involved in the differentiation of vegetative cells to heterocysts allow a new twist on an old method of isolating developmental genes.</title>
        <authorList>
            <person name="Bauer C.C."/>
            <person name="Scappino L."/>
            <person name="Haselkorn R."/>
        </authorList>
    </citation>
    <scope>NUCLEOTIDE SEQUENCE [GENOMIC DNA]</scope>
    <source>
        <strain>PCC 7120 / SAG 25.82 / UTEX 2576</strain>
    </source>
</reference>
<reference key="2">
    <citation type="journal article" date="2001" name="DNA Res.">
        <title>Complete genomic sequence of the filamentous nitrogen-fixing cyanobacterium Anabaena sp. strain PCC 7120.</title>
        <authorList>
            <person name="Kaneko T."/>
            <person name="Nakamura Y."/>
            <person name="Wolk C.P."/>
            <person name="Kuritz T."/>
            <person name="Sasamoto S."/>
            <person name="Watanabe A."/>
            <person name="Iriguchi M."/>
            <person name="Ishikawa A."/>
            <person name="Kawashima K."/>
            <person name="Kimura T."/>
            <person name="Kishida Y."/>
            <person name="Kohara M."/>
            <person name="Matsumoto M."/>
            <person name="Matsuno A."/>
            <person name="Muraki A."/>
            <person name="Nakazaki N."/>
            <person name="Shimpo S."/>
            <person name="Sugimoto M."/>
            <person name="Takazawa M."/>
            <person name="Yamada M."/>
            <person name="Yasuda M."/>
            <person name="Tabata S."/>
        </authorList>
    </citation>
    <scope>NUCLEOTIDE SEQUENCE [LARGE SCALE GENOMIC DNA]</scope>
    <source>
        <strain>PCC 7120 / SAG 25.82 / UTEX 2576</strain>
    </source>
</reference>
<dbReference type="EMBL" id="U14553">
    <property type="protein sequence ID" value="AAA50356.1"/>
    <property type="molecule type" value="Genomic_DNA"/>
</dbReference>
<dbReference type="EMBL" id="BA000019">
    <property type="protein sequence ID" value="BAB77969.1"/>
    <property type="molecule type" value="Genomic_DNA"/>
</dbReference>
<dbReference type="PIR" id="AE2006">
    <property type="entry name" value="AE2006"/>
</dbReference>
<dbReference type="RefSeq" id="WP_010995772.1">
    <property type="nucleotide sequence ID" value="NZ_RSCN01000041.1"/>
</dbReference>
<dbReference type="SMR" id="P46017"/>
<dbReference type="STRING" id="103690.gene:10493619"/>
<dbReference type="KEGG" id="ana:alr1603"/>
<dbReference type="eggNOG" id="COG1716">
    <property type="taxonomic scope" value="Bacteria"/>
</dbReference>
<dbReference type="OrthoDB" id="9816434at2"/>
<dbReference type="Proteomes" id="UP000002483">
    <property type="component" value="Chromosome"/>
</dbReference>
<dbReference type="GO" id="GO:0008270">
    <property type="term" value="F:zinc ion binding"/>
    <property type="evidence" value="ECO:0007669"/>
    <property type="project" value="UniProtKB-KW"/>
</dbReference>
<dbReference type="GO" id="GO:0043158">
    <property type="term" value="P:heterocyst development"/>
    <property type="evidence" value="ECO:0007669"/>
    <property type="project" value="UniProtKB-KW"/>
</dbReference>
<dbReference type="CDD" id="cd00060">
    <property type="entry name" value="FHA"/>
    <property type="match status" value="1"/>
</dbReference>
<dbReference type="Gene3D" id="2.60.200.20">
    <property type="match status" value="1"/>
</dbReference>
<dbReference type="InterPro" id="IPR025874">
    <property type="entry name" value="DZR"/>
</dbReference>
<dbReference type="InterPro" id="IPR000253">
    <property type="entry name" value="FHA_dom"/>
</dbReference>
<dbReference type="InterPro" id="IPR008984">
    <property type="entry name" value="SMAD_FHA_dom_sf"/>
</dbReference>
<dbReference type="Pfam" id="PF12773">
    <property type="entry name" value="DZR"/>
    <property type="match status" value="1"/>
</dbReference>
<dbReference type="Pfam" id="PF00498">
    <property type="entry name" value="FHA"/>
    <property type="match status" value="1"/>
</dbReference>
<dbReference type="PRINTS" id="PR01217">
    <property type="entry name" value="PRICHEXTENSN"/>
</dbReference>
<dbReference type="SMART" id="SM00240">
    <property type="entry name" value="FHA"/>
    <property type="match status" value="1"/>
</dbReference>
<dbReference type="SUPFAM" id="SSF49879">
    <property type="entry name" value="SMAD/FHA domain"/>
    <property type="match status" value="1"/>
</dbReference>
<dbReference type="PROSITE" id="PS50006">
    <property type="entry name" value="FHA_DOMAIN"/>
    <property type="match status" value="1"/>
</dbReference>
<sequence>MIVCPNCNHPNPDGAVQCEACYTPLPATSNCPNCGATVQSDAAFCGQCGFNLHSVAAPAATVATIAPDVPVEVPPLANPDPLLELLQPNALGLDPVANENPPAPAPLPPTAVAAPPDATPVVVEVTPAPPPPEPVVVEASIPTPPPEPVAPPEPVPAVEPAPAPETVVAAPPSPARTQLQQITARLVHVQSDQEIELPPSLSVVHIGKPNDRIPPDVDVSGFANSEIVSRVHADIRLEGDAHYIEDVGSSNGTYINNLPLLPGNRHRLRPGDRISLGKGDLVTFLFKLA</sequence>
<evidence type="ECO:0000255" key="1"/>
<evidence type="ECO:0000255" key="2">
    <source>
        <dbReference type="PROSITE-ProRule" id="PRU00086"/>
    </source>
</evidence>
<keyword id="KW-0364">Heterocyst</keyword>
<keyword id="KW-0479">Metal-binding</keyword>
<keyword id="KW-1185">Reference proteome</keyword>
<keyword id="KW-0862">Zinc</keyword>
<keyword id="KW-0863">Zinc-finger</keyword>